<name>PSBT_PHAAO</name>
<feature type="chain" id="PRO_0000276307" description="Photosystem II reaction center protein T">
    <location>
        <begin position="1"/>
        <end position="35"/>
    </location>
</feature>
<feature type="transmembrane region" description="Helical" evidence="1">
    <location>
        <begin position="3"/>
        <end position="23"/>
    </location>
</feature>
<evidence type="ECO:0000255" key="1">
    <source>
        <dbReference type="HAMAP-Rule" id="MF_00808"/>
    </source>
</evidence>
<gene>
    <name evidence="1" type="primary">psbT</name>
</gene>
<keyword id="KW-0150">Chloroplast</keyword>
<keyword id="KW-0472">Membrane</keyword>
<keyword id="KW-0602">Photosynthesis</keyword>
<keyword id="KW-0604">Photosystem II</keyword>
<keyword id="KW-0934">Plastid</keyword>
<keyword id="KW-0793">Thylakoid</keyword>
<keyword id="KW-0812">Transmembrane</keyword>
<keyword id="KW-1133">Transmembrane helix</keyword>
<reference key="1">
    <citation type="journal article" date="2006" name="Mol. Biol. Evol.">
        <title>The chloroplast genome of Phalaenopsis aphrodite (Orchidaceae): comparative analysis of evolutionary rate with that of grasses and its phylogenetic implications.</title>
        <authorList>
            <person name="Chang C.-C."/>
            <person name="Lin H.-C."/>
            <person name="Lin I.-P."/>
            <person name="Chow T.-Y."/>
            <person name="Chen H.-H."/>
            <person name="Chen W.-H."/>
            <person name="Cheng C.-H."/>
            <person name="Lin C.-Y."/>
            <person name="Liu S.-M."/>
            <person name="Chang C.-C."/>
            <person name="Chaw S.-M."/>
        </authorList>
    </citation>
    <scope>NUCLEOTIDE SEQUENCE [LARGE SCALE GENOMIC DNA]</scope>
    <source>
        <strain>cv. Taisugar TS-97</strain>
    </source>
</reference>
<accession>Q3BAL0</accession>
<geneLocation type="chloroplast"/>
<dbReference type="EMBL" id="AY916449">
    <property type="protein sequence ID" value="AAW82526.1"/>
    <property type="molecule type" value="Genomic_DNA"/>
</dbReference>
<dbReference type="RefSeq" id="YP_358608.1">
    <property type="nucleotide sequence ID" value="NC_007499.1"/>
</dbReference>
<dbReference type="SMR" id="Q3BAL0"/>
<dbReference type="GeneID" id="3741707"/>
<dbReference type="GO" id="GO:0009535">
    <property type="term" value="C:chloroplast thylakoid membrane"/>
    <property type="evidence" value="ECO:0007669"/>
    <property type="project" value="UniProtKB-SubCell"/>
</dbReference>
<dbReference type="GO" id="GO:0009539">
    <property type="term" value="C:photosystem II reaction center"/>
    <property type="evidence" value="ECO:0007669"/>
    <property type="project" value="InterPro"/>
</dbReference>
<dbReference type="GO" id="GO:0015979">
    <property type="term" value="P:photosynthesis"/>
    <property type="evidence" value="ECO:0007669"/>
    <property type="project" value="UniProtKB-UniRule"/>
</dbReference>
<dbReference type="HAMAP" id="MF_00808">
    <property type="entry name" value="PSII_PsbT"/>
    <property type="match status" value="1"/>
</dbReference>
<dbReference type="InterPro" id="IPR001743">
    <property type="entry name" value="PSII_PsbT"/>
</dbReference>
<dbReference type="InterPro" id="IPR037268">
    <property type="entry name" value="PSII_PsbT_sf"/>
</dbReference>
<dbReference type="PANTHER" id="PTHR36411">
    <property type="match status" value="1"/>
</dbReference>
<dbReference type="PANTHER" id="PTHR36411:SF2">
    <property type="entry name" value="PHOTOSYSTEM II REACTION CENTER PROTEIN T"/>
    <property type="match status" value="1"/>
</dbReference>
<dbReference type="Pfam" id="PF01405">
    <property type="entry name" value="PsbT"/>
    <property type="match status" value="1"/>
</dbReference>
<dbReference type="SUPFAM" id="SSF161029">
    <property type="entry name" value="Photosystem II reaction center protein T, PsbT"/>
    <property type="match status" value="1"/>
</dbReference>
<comment type="function">
    <text evidence="1">Found at the monomer-monomer interface of the photosystem II (PS II) dimer, plays a role in assembly and dimerization of PSII. PSII is a light-driven water plastoquinone oxidoreductase, using light energy to abstract electrons from H(2)O, generating a proton gradient subsequently used for ATP formation.</text>
</comment>
<comment type="subunit">
    <text evidence="1">PSII is composed of 1 copy each of membrane proteins PsbA, PsbB, PsbC, PsbD, PsbE, PsbF, PsbH, PsbI, PsbJ, PsbK, PsbL, PsbM, PsbT, PsbY, PsbZ, Psb30/Ycf12, at least 3 peripheral proteins of the oxygen-evolving complex and a large number of cofactors. It forms dimeric complexes.</text>
</comment>
<comment type="subcellular location">
    <subcellularLocation>
        <location evidence="1">Plastid</location>
        <location evidence="1">Chloroplast thylakoid membrane</location>
        <topology evidence="1">Single-pass membrane protein</topology>
    </subcellularLocation>
</comment>
<comment type="similarity">
    <text evidence="1">Belongs to the PsbT family.</text>
</comment>
<protein>
    <recommendedName>
        <fullName evidence="1">Photosystem II reaction center protein T</fullName>
        <shortName evidence="1">PSII-T</shortName>
    </recommendedName>
</protein>
<sequence>MEALVYTFLLVSTLGIIFFAIFFREPPKVPTKKTK</sequence>
<proteinExistence type="inferred from homology"/>
<organism>
    <name type="scientific">Phalaenopsis aphrodite subsp. formosana</name>
    <name type="common">Moth orchid</name>
    <dbReference type="NCBI Taxonomy" id="308872"/>
    <lineage>
        <taxon>Eukaryota</taxon>
        <taxon>Viridiplantae</taxon>
        <taxon>Streptophyta</taxon>
        <taxon>Embryophyta</taxon>
        <taxon>Tracheophyta</taxon>
        <taxon>Spermatophyta</taxon>
        <taxon>Magnoliopsida</taxon>
        <taxon>Liliopsida</taxon>
        <taxon>Asparagales</taxon>
        <taxon>Orchidaceae</taxon>
        <taxon>Epidendroideae</taxon>
        <taxon>Vandeae</taxon>
        <taxon>Aeridinae</taxon>
        <taxon>Phalaenopsis</taxon>
    </lineage>
</organism>